<feature type="chain" id="PRO_1000069537" description="NAD-dependent malic enzyme">
    <location>
        <begin position="1"/>
        <end position="565"/>
    </location>
</feature>
<feature type="active site" description="Proton donor" evidence="1">
    <location>
        <position position="104"/>
    </location>
</feature>
<feature type="active site" description="Proton acceptor" evidence="1">
    <location>
        <position position="175"/>
    </location>
</feature>
<feature type="binding site" evidence="1">
    <location>
        <position position="157"/>
    </location>
    <ligand>
        <name>NAD(+)</name>
        <dbReference type="ChEBI" id="CHEBI:57540"/>
    </ligand>
</feature>
<feature type="binding site" evidence="1">
    <location>
        <position position="246"/>
    </location>
    <ligand>
        <name>a divalent metal cation</name>
        <dbReference type="ChEBI" id="CHEBI:60240"/>
    </ligand>
</feature>
<feature type="binding site" evidence="1">
    <location>
        <position position="247"/>
    </location>
    <ligand>
        <name>a divalent metal cation</name>
        <dbReference type="ChEBI" id="CHEBI:60240"/>
    </ligand>
</feature>
<feature type="binding site" evidence="1">
    <location>
        <position position="270"/>
    </location>
    <ligand>
        <name>a divalent metal cation</name>
        <dbReference type="ChEBI" id="CHEBI:60240"/>
    </ligand>
</feature>
<feature type="binding site" evidence="1">
    <location>
        <position position="270"/>
    </location>
    <ligand>
        <name>NAD(+)</name>
        <dbReference type="ChEBI" id="CHEBI:57540"/>
    </ligand>
</feature>
<feature type="binding site" evidence="1">
    <location>
        <position position="418"/>
    </location>
    <ligand>
        <name>NAD(+)</name>
        <dbReference type="ChEBI" id="CHEBI:57540"/>
    </ligand>
</feature>
<feature type="site" description="Important for activity" evidence="1">
    <location>
        <position position="270"/>
    </location>
</feature>
<evidence type="ECO:0000255" key="1">
    <source>
        <dbReference type="HAMAP-Rule" id="MF_01619"/>
    </source>
</evidence>
<keyword id="KW-0479">Metal-binding</keyword>
<keyword id="KW-0520">NAD</keyword>
<keyword id="KW-0560">Oxidoreductase</keyword>
<organism>
    <name type="scientific">Serratia proteamaculans (strain 568)</name>
    <dbReference type="NCBI Taxonomy" id="399741"/>
    <lineage>
        <taxon>Bacteria</taxon>
        <taxon>Pseudomonadati</taxon>
        <taxon>Pseudomonadota</taxon>
        <taxon>Gammaproteobacteria</taxon>
        <taxon>Enterobacterales</taxon>
        <taxon>Yersiniaceae</taxon>
        <taxon>Serratia</taxon>
    </lineage>
</organism>
<protein>
    <recommendedName>
        <fullName evidence="1">NAD-dependent malic enzyme</fullName>
        <shortName evidence="1">NAD-ME</shortName>
        <ecNumber evidence="1">1.1.1.38</ecNumber>
    </recommendedName>
</protein>
<sequence length="565" mass="62750">MELEYESKRPLYIPYAGPILLEFPLLNKGSAFTEEERNHFNLQGLLPDAVETIEEQAERAYRQYQDFKNDSDKHIYLRNIQDTNETLFYRLLDSHLSEMMPIIYTPTVGEACEHFSDIYRRARGLFISYPNRDRIDDMLQNATKQNVKVIVVTDGERILGLGDQGIGGMGIPIGKLSLYTACGGISPAYTLPVVLDVGTNNPQRLNDPLYMGWRHPRISGDEYHAFVEEFIQAVKRRWPNVLLQFEDFAQNNATPLLNRYRDEICCFNDDIQGTAAVTLGSLIAASRAAGSQLRDQTVTFLGAGSAGCGIAEQIIAQMKSEGLSEDEARARVFMVDRFGLLTDKLPNLLDFQSKLVQKSENLTAWQTQSDAISLLDVVRNAKPTILIGVSGQPGLFTEELIREMHKHCPRPIVMPLSNPTSRVEARPEDIINWTEGAALVATGSPFAPVHYKEQQIPIAQCNNSYIFPGIGLGVLASGATRVTDAMLMAASRALAECSPLATDGHGALLPDIDDIQGVSKCIAMEVGKAAQLQGMAVVTSEEALSKAIEHNFWRPQYRSYKRTSF</sequence>
<gene>
    <name evidence="1" type="primary">maeA</name>
    <name type="ordered locus">Spro_1567</name>
</gene>
<accession>A8GC31</accession>
<dbReference type="EC" id="1.1.1.38" evidence="1"/>
<dbReference type="EMBL" id="CP000826">
    <property type="protein sequence ID" value="ABV40671.1"/>
    <property type="molecule type" value="Genomic_DNA"/>
</dbReference>
<dbReference type="SMR" id="A8GC31"/>
<dbReference type="STRING" id="399741.Spro_1567"/>
<dbReference type="KEGG" id="spe:Spro_1567"/>
<dbReference type="eggNOG" id="COG0281">
    <property type="taxonomic scope" value="Bacteria"/>
</dbReference>
<dbReference type="HOGENOM" id="CLU_011405_5_2_6"/>
<dbReference type="OrthoDB" id="3314528at2"/>
<dbReference type="GO" id="GO:0005829">
    <property type="term" value="C:cytosol"/>
    <property type="evidence" value="ECO:0007669"/>
    <property type="project" value="TreeGrafter"/>
</dbReference>
<dbReference type="GO" id="GO:0004471">
    <property type="term" value="F:malate dehydrogenase (decarboxylating) (NAD+) activity"/>
    <property type="evidence" value="ECO:0007669"/>
    <property type="project" value="UniProtKB-UniRule"/>
</dbReference>
<dbReference type="GO" id="GO:0046872">
    <property type="term" value="F:metal ion binding"/>
    <property type="evidence" value="ECO:0007669"/>
    <property type="project" value="UniProtKB-KW"/>
</dbReference>
<dbReference type="GO" id="GO:0051287">
    <property type="term" value="F:NAD binding"/>
    <property type="evidence" value="ECO:0007669"/>
    <property type="project" value="InterPro"/>
</dbReference>
<dbReference type="GO" id="GO:0008948">
    <property type="term" value="F:oxaloacetate decarboxylase activity"/>
    <property type="evidence" value="ECO:0007669"/>
    <property type="project" value="UniProtKB-UniRule"/>
</dbReference>
<dbReference type="GO" id="GO:0006108">
    <property type="term" value="P:malate metabolic process"/>
    <property type="evidence" value="ECO:0007669"/>
    <property type="project" value="TreeGrafter"/>
</dbReference>
<dbReference type="CDD" id="cd05312">
    <property type="entry name" value="NAD_bind_1_malic_enz"/>
    <property type="match status" value="1"/>
</dbReference>
<dbReference type="FunFam" id="3.40.50.10380:FF:000001">
    <property type="entry name" value="NAD-dependent malic enzyme"/>
    <property type="match status" value="1"/>
</dbReference>
<dbReference type="FunFam" id="3.40.50.720:FF:000055">
    <property type="entry name" value="NAD-dependent malic enzyme"/>
    <property type="match status" value="1"/>
</dbReference>
<dbReference type="Gene3D" id="3.40.50.10380">
    <property type="entry name" value="Malic enzyme, N-terminal domain"/>
    <property type="match status" value="1"/>
</dbReference>
<dbReference type="Gene3D" id="3.40.50.720">
    <property type="entry name" value="NAD(P)-binding Rossmann-like Domain"/>
    <property type="match status" value="1"/>
</dbReference>
<dbReference type="HAMAP" id="MF_01619">
    <property type="entry name" value="NAD_malic_enz"/>
    <property type="match status" value="1"/>
</dbReference>
<dbReference type="InterPro" id="IPR046346">
    <property type="entry name" value="Aminoacid_DH-like_N_sf"/>
</dbReference>
<dbReference type="InterPro" id="IPR015884">
    <property type="entry name" value="Malic_enzyme_CS"/>
</dbReference>
<dbReference type="InterPro" id="IPR012301">
    <property type="entry name" value="Malic_N_dom"/>
</dbReference>
<dbReference type="InterPro" id="IPR037062">
    <property type="entry name" value="Malic_N_dom_sf"/>
</dbReference>
<dbReference type="InterPro" id="IPR012302">
    <property type="entry name" value="Malic_NAD-bd"/>
</dbReference>
<dbReference type="InterPro" id="IPR001891">
    <property type="entry name" value="Malic_OxRdtase"/>
</dbReference>
<dbReference type="InterPro" id="IPR036291">
    <property type="entry name" value="NAD(P)-bd_dom_sf"/>
</dbReference>
<dbReference type="InterPro" id="IPR023667">
    <property type="entry name" value="NAD_malic_enz_proteobac"/>
</dbReference>
<dbReference type="NCBIfam" id="NF010052">
    <property type="entry name" value="PRK13529.1"/>
    <property type="match status" value="1"/>
</dbReference>
<dbReference type="PANTHER" id="PTHR23406">
    <property type="entry name" value="MALIC ENZYME-RELATED"/>
    <property type="match status" value="1"/>
</dbReference>
<dbReference type="PANTHER" id="PTHR23406:SF34">
    <property type="entry name" value="NAD-DEPENDENT MALIC ENZYME, MITOCHONDRIAL"/>
    <property type="match status" value="1"/>
</dbReference>
<dbReference type="Pfam" id="PF00390">
    <property type="entry name" value="malic"/>
    <property type="match status" value="1"/>
</dbReference>
<dbReference type="Pfam" id="PF03949">
    <property type="entry name" value="Malic_M"/>
    <property type="match status" value="1"/>
</dbReference>
<dbReference type="PIRSF" id="PIRSF000106">
    <property type="entry name" value="ME"/>
    <property type="match status" value="1"/>
</dbReference>
<dbReference type="PRINTS" id="PR00072">
    <property type="entry name" value="MALOXRDTASE"/>
</dbReference>
<dbReference type="SMART" id="SM01274">
    <property type="entry name" value="malic"/>
    <property type="match status" value="1"/>
</dbReference>
<dbReference type="SMART" id="SM00919">
    <property type="entry name" value="Malic_M"/>
    <property type="match status" value="1"/>
</dbReference>
<dbReference type="SUPFAM" id="SSF53223">
    <property type="entry name" value="Aminoacid dehydrogenase-like, N-terminal domain"/>
    <property type="match status" value="1"/>
</dbReference>
<dbReference type="SUPFAM" id="SSF51735">
    <property type="entry name" value="NAD(P)-binding Rossmann-fold domains"/>
    <property type="match status" value="1"/>
</dbReference>
<dbReference type="PROSITE" id="PS00331">
    <property type="entry name" value="MALIC_ENZYMES"/>
    <property type="match status" value="1"/>
</dbReference>
<reference key="1">
    <citation type="submission" date="2007-09" db="EMBL/GenBank/DDBJ databases">
        <title>Complete sequence of chromosome of Serratia proteamaculans 568.</title>
        <authorList>
            <consortium name="US DOE Joint Genome Institute"/>
            <person name="Copeland A."/>
            <person name="Lucas S."/>
            <person name="Lapidus A."/>
            <person name="Barry K."/>
            <person name="Glavina del Rio T."/>
            <person name="Dalin E."/>
            <person name="Tice H."/>
            <person name="Pitluck S."/>
            <person name="Chain P."/>
            <person name="Malfatti S."/>
            <person name="Shin M."/>
            <person name="Vergez L."/>
            <person name="Schmutz J."/>
            <person name="Larimer F."/>
            <person name="Land M."/>
            <person name="Hauser L."/>
            <person name="Kyrpides N."/>
            <person name="Kim E."/>
            <person name="Taghavi S."/>
            <person name="Newman L."/>
            <person name="Vangronsveld J."/>
            <person name="van der Lelie D."/>
            <person name="Richardson P."/>
        </authorList>
    </citation>
    <scope>NUCLEOTIDE SEQUENCE [LARGE SCALE GENOMIC DNA]</scope>
    <source>
        <strain>568</strain>
    </source>
</reference>
<name>MAO1_SERP5</name>
<comment type="catalytic activity">
    <reaction evidence="1">
        <text>(S)-malate + NAD(+) = pyruvate + CO2 + NADH</text>
        <dbReference type="Rhea" id="RHEA:12653"/>
        <dbReference type="ChEBI" id="CHEBI:15361"/>
        <dbReference type="ChEBI" id="CHEBI:15589"/>
        <dbReference type="ChEBI" id="CHEBI:16526"/>
        <dbReference type="ChEBI" id="CHEBI:57540"/>
        <dbReference type="ChEBI" id="CHEBI:57945"/>
        <dbReference type="EC" id="1.1.1.38"/>
    </reaction>
</comment>
<comment type="catalytic activity">
    <reaction evidence="1">
        <text>oxaloacetate + H(+) = pyruvate + CO2</text>
        <dbReference type="Rhea" id="RHEA:15641"/>
        <dbReference type="ChEBI" id="CHEBI:15361"/>
        <dbReference type="ChEBI" id="CHEBI:15378"/>
        <dbReference type="ChEBI" id="CHEBI:16452"/>
        <dbReference type="ChEBI" id="CHEBI:16526"/>
        <dbReference type="EC" id="1.1.1.38"/>
    </reaction>
</comment>
<comment type="cofactor">
    <cofactor evidence="1">
        <name>Mg(2+)</name>
        <dbReference type="ChEBI" id="CHEBI:18420"/>
    </cofactor>
    <cofactor evidence="1">
        <name>Mn(2+)</name>
        <dbReference type="ChEBI" id="CHEBI:29035"/>
    </cofactor>
    <text evidence="1">Divalent metal cations. Prefers magnesium or manganese.</text>
</comment>
<comment type="subunit">
    <text evidence="1">Homotetramer.</text>
</comment>
<comment type="similarity">
    <text evidence="1">Belongs to the malic enzymes family.</text>
</comment>
<proteinExistence type="inferred from homology"/>